<proteinExistence type="inferred from homology"/>
<comment type="function">
    <text evidence="1">Catalyzes the addition and repair of the essential 3'-terminal CCA sequence in tRNAs without using a nucleic acid template. Adds these three nucleotides in the order of C, C, and A to the tRNA nucleotide-73, using CTP and ATP as substrates and producing inorganic pyrophosphate. tRNA 3'-terminal CCA addition is required both for tRNA processing and repair. Also involved in tRNA surveillance by mediating tandem CCA addition to generate a CCACCA at the 3' terminus of unstable tRNAs. While stable tRNAs receive only 3'-terminal CCA, unstable tRNAs are marked with CCACCA and rapidly degraded.</text>
</comment>
<comment type="catalytic activity">
    <reaction evidence="1">
        <text>a tRNA precursor + 2 CTP + ATP = a tRNA with a 3' CCA end + 3 diphosphate</text>
        <dbReference type="Rhea" id="RHEA:14433"/>
        <dbReference type="Rhea" id="RHEA-COMP:10465"/>
        <dbReference type="Rhea" id="RHEA-COMP:10468"/>
        <dbReference type="ChEBI" id="CHEBI:30616"/>
        <dbReference type="ChEBI" id="CHEBI:33019"/>
        <dbReference type="ChEBI" id="CHEBI:37563"/>
        <dbReference type="ChEBI" id="CHEBI:74896"/>
        <dbReference type="ChEBI" id="CHEBI:83071"/>
        <dbReference type="EC" id="2.7.7.72"/>
    </reaction>
</comment>
<comment type="catalytic activity">
    <reaction evidence="1">
        <text>a tRNA with a 3' CCA end + 2 CTP + ATP = a tRNA with a 3' CCACCA end + 3 diphosphate</text>
        <dbReference type="Rhea" id="RHEA:76235"/>
        <dbReference type="Rhea" id="RHEA-COMP:10468"/>
        <dbReference type="Rhea" id="RHEA-COMP:18655"/>
        <dbReference type="ChEBI" id="CHEBI:30616"/>
        <dbReference type="ChEBI" id="CHEBI:33019"/>
        <dbReference type="ChEBI" id="CHEBI:37563"/>
        <dbReference type="ChEBI" id="CHEBI:83071"/>
        <dbReference type="ChEBI" id="CHEBI:195187"/>
    </reaction>
    <physiologicalReaction direction="left-to-right" evidence="1">
        <dbReference type="Rhea" id="RHEA:76236"/>
    </physiologicalReaction>
</comment>
<comment type="cofactor">
    <cofactor evidence="1">
        <name>Mg(2+)</name>
        <dbReference type="ChEBI" id="CHEBI:18420"/>
    </cofactor>
    <text evidence="1">Magnesium is required for nucleotidyltransferase activity.</text>
</comment>
<comment type="cofactor">
    <cofactor evidence="1">
        <name>Ni(2+)</name>
        <dbReference type="ChEBI" id="CHEBI:49786"/>
    </cofactor>
    <text evidence="1">Nickel for phosphatase activity.</text>
</comment>
<comment type="subunit">
    <text evidence="1">Monomer. Can also form homodimers and oligomers.</text>
</comment>
<comment type="domain">
    <text evidence="1">Comprises two domains: an N-terminal domain containing the nucleotidyltransferase activity and a C-terminal HD domain associated with both phosphodiesterase and phosphatase activities.</text>
</comment>
<comment type="miscellaneous">
    <text evidence="1">A single active site specifically recognizes both ATP and CTP and is responsible for their addition.</text>
</comment>
<comment type="similarity">
    <text evidence="1">Belongs to the tRNA nucleotidyltransferase/poly(A) polymerase family. Bacterial CCA-adding enzyme type 1 subfamily.</text>
</comment>
<reference key="1">
    <citation type="journal article" date="2002" name="Environ. Microbiol.">
        <title>Complete genome sequence and comparative analysis of the metabolically versatile Pseudomonas putida KT2440.</title>
        <authorList>
            <person name="Nelson K.E."/>
            <person name="Weinel C."/>
            <person name="Paulsen I.T."/>
            <person name="Dodson R.J."/>
            <person name="Hilbert H."/>
            <person name="Martins dos Santos V.A.P."/>
            <person name="Fouts D.E."/>
            <person name="Gill S.R."/>
            <person name="Pop M."/>
            <person name="Holmes M."/>
            <person name="Brinkac L.M."/>
            <person name="Beanan M.J."/>
            <person name="DeBoy R.T."/>
            <person name="Daugherty S.C."/>
            <person name="Kolonay J.F."/>
            <person name="Madupu R."/>
            <person name="Nelson W.C."/>
            <person name="White O."/>
            <person name="Peterson J.D."/>
            <person name="Khouri H.M."/>
            <person name="Hance I."/>
            <person name="Chris Lee P."/>
            <person name="Holtzapple E.K."/>
            <person name="Scanlan D."/>
            <person name="Tran K."/>
            <person name="Moazzez A."/>
            <person name="Utterback T.R."/>
            <person name="Rizzo M."/>
            <person name="Lee K."/>
            <person name="Kosack D."/>
            <person name="Moestl D."/>
            <person name="Wedler H."/>
            <person name="Lauber J."/>
            <person name="Stjepandic D."/>
            <person name="Hoheisel J."/>
            <person name="Straetz M."/>
            <person name="Heim S."/>
            <person name="Kiewitz C."/>
            <person name="Eisen J.A."/>
            <person name="Timmis K.N."/>
            <person name="Duesterhoeft A."/>
            <person name="Tuemmler B."/>
            <person name="Fraser C.M."/>
        </authorList>
    </citation>
    <scope>NUCLEOTIDE SEQUENCE [LARGE SCALE GENOMIC DNA]</scope>
    <source>
        <strain>ATCC 47054 / DSM 6125 / CFBP 8728 / NCIMB 11950 / KT2440</strain>
    </source>
</reference>
<gene>
    <name evidence="1" type="primary">cca</name>
    <name type="ordered locus">PP_0394</name>
</gene>
<dbReference type="EC" id="2.7.7.72" evidence="1"/>
<dbReference type="EC" id="3.1.3.-" evidence="1"/>
<dbReference type="EC" id="3.1.4.-" evidence="1"/>
<dbReference type="EMBL" id="AE015451">
    <property type="protein sequence ID" value="AAN66025.1"/>
    <property type="molecule type" value="Genomic_DNA"/>
</dbReference>
<dbReference type="RefSeq" id="NP_742561.1">
    <property type="nucleotide sequence ID" value="NC_002947.4"/>
</dbReference>
<dbReference type="RefSeq" id="WP_010951739.1">
    <property type="nucleotide sequence ID" value="NZ_CP169744.1"/>
</dbReference>
<dbReference type="SMR" id="Q88QU2"/>
<dbReference type="STRING" id="160488.PP_0394"/>
<dbReference type="PaxDb" id="160488-PP_0394"/>
<dbReference type="KEGG" id="ppu:PP_0394"/>
<dbReference type="PATRIC" id="fig|160488.4.peg.424"/>
<dbReference type="eggNOG" id="COG0617">
    <property type="taxonomic scope" value="Bacteria"/>
</dbReference>
<dbReference type="HOGENOM" id="CLU_015961_1_0_6"/>
<dbReference type="OrthoDB" id="9805698at2"/>
<dbReference type="PhylomeDB" id="Q88QU2"/>
<dbReference type="BioCyc" id="PPUT160488:G1G01-431-MONOMER"/>
<dbReference type="Proteomes" id="UP000000556">
    <property type="component" value="Chromosome"/>
</dbReference>
<dbReference type="GO" id="GO:0005524">
    <property type="term" value="F:ATP binding"/>
    <property type="evidence" value="ECO:0007669"/>
    <property type="project" value="UniProtKB-UniRule"/>
</dbReference>
<dbReference type="GO" id="GO:0004810">
    <property type="term" value="F:CCA tRNA nucleotidyltransferase activity"/>
    <property type="evidence" value="ECO:0007669"/>
    <property type="project" value="UniProtKB-UniRule"/>
</dbReference>
<dbReference type="GO" id="GO:0004112">
    <property type="term" value="F:cyclic-nucleotide phosphodiesterase activity"/>
    <property type="evidence" value="ECO:0007669"/>
    <property type="project" value="UniProtKB-UniRule"/>
</dbReference>
<dbReference type="GO" id="GO:0000287">
    <property type="term" value="F:magnesium ion binding"/>
    <property type="evidence" value="ECO:0007669"/>
    <property type="project" value="UniProtKB-UniRule"/>
</dbReference>
<dbReference type="GO" id="GO:0016791">
    <property type="term" value="F:phosphatase activity"/>
    <property type="evidence" value="ECO:0007669"/>
    <property type="project" value="UniProtKB-UniRule"/>
</dbReference>
<dbReference type="GO" id="GO:0000049">
    <property type="term" value="F:tRNA binding"/>
    <property type="evidence" value="ECO:0007669"/>
    <property type="project" value="UniProtKB-UniRule"/>
</dbReference>
<dbReference type="GO" id="GO:0042245">
    <property type="term" value="P:RNA repair"/>
    <property type="evidence" value="ECO:0007669"/>
    <property type="project" value="UniProtKB-KW"/>
</dbReference>
<dbReference type="GO" id="GO:0001680">
    <property type="term" value="P:tRNA 3'-terminal CCA addition"/>
    <property type="evidence" value="ECO:0007669"/>
    <property type="project" value="UniProtKB-UniRule"/>
</dbReference>
<dbReference type="CDD" id="cd05398">
    <property type="entry name" value="NT_ClassII-CCAase"/>
    <property type="match status" value="1"/>
</dbReference>
<dbReference type="Gene3D" id="3.30.460.10">
    <property type="entry name" value="Beta Polymerase, domain 2"/>
    <property type="match status" value="1"/>
</dbReference>
<dbReference type="Gene3D" id="1.10.3090.10">
    <property type="entry name" value="cca-adding enzyme, domain 2"/>
    <property type="match status" value="1"/>
</dbReference>
<dbReference type="HAMAP" id="MF_01261">
    <property type="entry name" value="CCA_bact_type1"/>
    <property type="match status" value="1"/>
</dbReference>
<dbReference type="HAMAP" id="MF_01262">
    <property type="entry name" value="CCA_bact_type2"/>
    <property type="match status" value="1"/>
</dbReference>
<dbReference type="InterPro" id="IPR012006">
    <property type="entry name" value="CCA_bact"/>
</dbReference>
<dbReference type="InterPro" id="IPR043519">
    <property type="entry name" value="NT_sf"/>
</dbReference>
<dbReference type="InterPro" id="IPR002646">
    <property type="entry name" value="PolA_pol_head_dom"/>
</dbReference>
<dbReference type="InterPro" id="IPR032828">
    <property type="entry name" value="PolyA_RNA-bd"/>
</dbReference>
<dbReference type="InterPro" id="IPR050124">
    <property type="entry name" value="tRNA_CCA-adding_enzyme"/>
</dbReference>
<dbReference type="PANTHER" id="PTHR47545">
    <property type="entry name" value="MULTIFUNCTIONAL CCA PROTEIN"/>
    <property type="match status" value="1"/>
</dbReference>
<dbReference type="PANTHER" id="PTHR47545:SF1">
    <property type="entry name" value="MULTIFUNCTIONAL CCA PROTEIN"/>
    <property type="match status" value="1"/>
</dbReference>
<dbReference type="Pfam" id="PF01743">
    <property type="entry name" value="PolyA_pol"/>
    <property type="match status" value="1"/>
</dbReference>
<dbReference type="Pfam" id="PF12627">
    <property type="entry name" value="PolyA_pol_RNAbd"/>
    <property type="match status" value="1"/>
</dbReference>
<dbReference type="PIRSF" id="PIRSF000813">
    <property type="entry name" value="CCA_bact"/>
    <property type="match status" value="1"/>
</dbReference>
<dbReference type="SUPFAM" id="SSF81301">
    <property type="entry name" value="Nucleotidyltransferase"/>
    <property type="match status" value="1"/>
</dbReference>
<dbReference type="SUPFAM" id="SSF81891">
    <property type="entry name" value="Poly A polymerase C-terminal region-like"/>
    <property type="match status" value="1"/>
</dbReference>
<name>CCA_PSEPK</name>
<organism>
    <name type="scientific">Pseudomonas putida (strain ATCC 47054 / DSM 6125 / CFBP 8728 / NCIMB 11950 / KT2440)</name>
    <dbReference type="NCBI Taxonomy" id="160488"/>
    <lineage>
        <taxon>Bacteria</taxon>
        <taxon>Pseudomonadati</taxon>
        <taxon>Pseudomonadota</taxon>
        <taxon>Gammaproteobacteria</taxon>
        <taxon>Pseudomonadales</taxon>
        <taxon>Pseudomonadaceae</taxon>
        <taxon>Pseudomonas</taxon>
    </lineage>
</organism>
<sequence length="368" mass="40573">MHIYKVGGAVRDRLLGRPVSDIDWLVVGATVEEMLANGYRPVGADFPVFLHPKTGEEYALARTERKSGRGYGGFTFHASPDVTLEEDLIRRDLTINAMAEDEAGTVYDPYQGKNDLDQRLLRHVSPAFAEDPLRVLRVARFAARYAPLGFRVADETLALMRQISASGELQALTAERSWKEIERALMEVQPQVFFKVLSACGALQELLPELDDGSRTLAALEQAAAHEQPLNVRWACLLRGLPPTSIKAVNQRLKAPRECQELAMLTGECLAQGNQALELPATALLELLQKFDVYRRPQRFEDFLTVCEMAARGDGEQGYPQADYLRGAAAAARAVDVKPLVQAGLTGQALGEALKGERLKALEAYQRG</sequence>
<keyword id="KW-0067">ATP-binding</keyword>
<keyword id="KW-0378">Hydrolase</keyword>
<keyword id="KW-0460">Magnesium</keyword>
<keyword id="KW-0479">Metal-binding</keyword>
<keyword id="KW-0511">Multifunctional enzyme</keyword>
<keyword id="KW-0533">Nickel</keyword>
<keyword id="KW-0547">Nucleotide-binding</keyword>
<keyword id="KW-0548">Nucleotidyltransferase</keyword>
<keyword id="KW-1185">Reference proteome</keyword>
<keyword id="KW-0692">RNA repair</keyword>
<keyword id="KW-0694">RNA-binding</keyword>
<keyword id="KW-0808">Transferase</keyword>
<keyword id="KW-0819">tRNA processing</keyword>
<feature type="chain" id="PRO_0000138994" description="Multifunctional CCA protein">
    <location>
        <begin position="1"/>
        <end position="368"/>
    </location>
</feature>
<feature type="binding site" evidence="1">
    <location>
        <position position="8"/>
    </location>
    <ligand>
        <name>ATP</name>
        <dbReference type="ChEBI" id="CHEBI:30616"/>
    </ligand>
</feature>
<feature type="binding site" evidence="1">
    <location>
        <position position="8"/>
    </location>
    <ligand>
        <name>CTP</name>
        <dbReference type="ChEBI" id="CHEBI:37563"/>
    </ligand>
</feature>
<feature type="binding site" evidence="1">
    <location>
        <position position="11"/>
    </location>
    <ligand>
        <name>ATP</name>
        <dbReference type="ChEBI" id="CHEBI:30616"/>
    </ligand>
</feature>
<feature type="binding site" evidence="1">
    <location>
        <position position="11"/>
    </location>
    <ligand>
        <name>CTP</name>
        <dbReference type="ChEBI" id="CHEBI:37563"/>
    </ligand>
</feature>
<feature type="binding site" evidence="1">
    <location>
        <position position="21"/>
    </location>
    <ligand>
        <name>Mg(2+)</name>
        <dbReference type="ChEBI" id="CHEBI:18420"/>
    </ligand>
</feature>
<feature type="binding site" evidence="1">
    <location>
        <position position="23"/>
    </location>
    <ligand>
        <name>Mg(2+)</name>
        <dbReference type="ChEBI" id="CHEBI:18420"/>
    </ligand>
</feature>
<feature type="binding site" evidence="1">
    <location>
        <position position="91"/>
    </location>
    <ligand>
        <name>ATP</name>
        <dbReference type="ChEBI" id="CHEBI:30616"/>
    </ligand>
</feature>
<feature type="binding site" evidence="1">
    <location>
        <position position="91"/>
    </location>
    <ligand>
        <name>CTP</name>
        <dbReference type="ChEBI" id="CHEBI:37563"/>
    </ligand>
</feature>
<feature type="binding site" evidence="1">
    <location>
        <position position="137"/>
    </location>
    <ligand>
        <name>ATP</name>
        <dbReference type="ChEBI" id="CHEBI:30616"/>
    </ligand>
</feature>
<feature type="binding site" evidence="1">
    <location>
        <position position="137"/>
    </location>
    <ligand>
        <name>CTP</name>
        <dbReference type="ChEBI" id="CHEBI:37563"/>
    </ligand>
</feature>
<feature type="binding site" evidence="1">
    <location>
        <position position="140"/>
    </location>
    <ligand>
        <name>ATP</name>
        <dbReference type="ChEBI" id="CHEBI:30616"/>
    </ligand>
</feature>
<feature type="binding site" evidence="1">
    <location>
        <position position="140"/>
    </location>
    <ligand>
        <name>CTP</name>
        <dbReference type="ChEBI" id="CHEBI:37563"/>
    </ligand>
</feature>
<protein>
    <recommendedName>
        <fullName evidence="1">Multifunctional CCA protein</fullName>
    </recommendedName>
    <domain>
        <recommendedName>
            <fullName evidence="1">CCA-adding enzyme</fullName>
            <ecNumber evidence="1">2.7.7.72</ecNumber>
        </recommendedName>
        <alternativeName>
            <fullName evidence="1">CCA tRNA nucleotidyltransferase</fullName>
        </alternativeName>
        <alternativeName>
            <fullName evidence="1">tRNA CCA-pyrophosphorylase</fullName>
        </alternativeName>
        <alternativeName>
            <fullName evidence="1">tRNA adenylyl-/cytidylyl-transferase</fullName>
        </alternativeName>
        <alternativeName>
            <fullName evidence="1">tRNA nucleotidyltransferase</fullName>
        </alternativeName>
        <alternativeName>
            <fullName evidence="1">tRNA-NT</fullName>
        </alternativeName>
    </domain>
    <domain>
        <recommendedName>
            <fullName evidence="1">2'-nucleotidase</fullName>
            <ecNumber evidence="1">3.1.3.-</ecNumber>
        </recommendedName>
    </domain>
    <domain>
        <recommendedName>
            <fullName evidence="1">2',3'-cyclic phosphodiesterase</fullName>
            <ecNumber evidence="1">3.1.4.-</ecNumber>
        </recommendedName>
    </domain>
    <domain>
        <recommendedName>
            <fullName evidence="1">Phosphatase</fullName>
            <ecNumber evidence="1">3.1.3.-</ecNumber>
        </recommendedName>
    </domain>
</protein>
<evidence type="ECO:0000255" key="1">
    <source>
        <dbReference type="HAMAP-Rule" id="MF_01261"/>
    </source>
</evidence>
<accession>Q88QU2</accession>